<sequence>MTTFTAKNETVQRDWYLVDAEGKTLGRLATELARRLLGKTKPVYTPHVDTGDYLVVINAEKVVVTGKKLTDKYYHRFTGYVGNLKSESLGQALQRHPERVLEIAVKGMLPKGPLGRAMYRKLKVYTGSKHPHTAQQPQVLDI</sequence>
<gene>
    <name evidence="1" type="primary">rplM</name>
    <name type="ordered locus">PD_0752</name>
</gene>
<proteinExistence type="inferred from homology"/>
<accession>Q87DD3</accession>
<reference key="1">
    <citation type="journal article" date="2003" name="J. Bacteriol.">
        <title>Comparative analyses of the complete genome sequences of Pierce's disease and citrus variegated chlorosis strains of Xylella fastidiosa.</title>
        <authorList>
            <person name="Van Sluys M.A."/>
            <person name="de Oliveira M.C."/>
            <person name="Monteiro-Vitorello C.B."/>
            <person name="Miyaki C.Y."/>
            <person name="Furlan L.R."/>
            <person name="Camargo L.E.A."/>
            <person name="da Silva A.C.R."/>
            <person name="Moon D.H."/>
            <person name="Takita M.A."/>
            <person name="Lemos E.G.M."/>
            <person name="Machado M.A."/>
            <person name="Ferro M.I.T."/>
            <person name="da Silva F.R."/>
            <person name="Goldman M.H.S."/>
            <person name="Goldman G.H."/>
            <person name="Lemos M.V.F."/>
            <person name="El-Dorry H."/>
            <person name="Tsai S.M."/>
            <person name="Carrer H."/>
            <person name="Carraro D.M."/>
            <person name="de Oliveira R.C."/>
            <person name="Nunes L.R."/>
            <person name="Siqueira W.J."/>
            <person name="Coutinho L.L."/>
            <person name="Kimura E.T."/>
            <person name="Ferro E.S."/>
            <person name="Harakava R."/>
            <person name="Kuramae E.E."/>
            <person name="Marino C.L."/>
            <person name="Giglioti E."/>
            <person name="Abreu I.L."/>
            <person name="Alves L.M.C."/>
            <person name="do Amaral A.M."/>
            <person name="Baia G.S."/>
            <person name="Blanco S.R."/>
            <person name="Brito M.S."/>
            <person name="Cannavan F.S."/>
            <person name="Celestino A.V."/>
            <person name="da Cunha A.F."/>
            <person name="Fenille R.C."/>
            <person name="Ferro J.A."/>
            <person name="Formighieri E.F."/>
            <person name="Kishi L.T."/>
            <person name="Leoni S.G."/>
            <person name="Oliveira A.R."/>
            <person name="Rosa V.E. Jr."/>
            <person name="Sassaki F.T."/>
            <person name="Sena J.A.D."/>
            <person name="de Souza A.A."/>
            <person name="Truffi D."/>
            <person name="Tsukumo F."/>
            <person name="Yanai G.M."/>
            <person name="Zaros L.G."/>
            <person name="Civerolo E.L."/>
            <person name="Simpson A.J.G."/>
            <person name="Almeida N.F. Jr."/>
            <person name="Setubal J.C."/>
            <person name="Kitajima J.P."/>
        </authorList>
    </citation>
    <scope>NUCLEOTIDE SEQUENCE [LARGE SCALE GENOMIC DNA]</scope>
    <source>
        <strain>Temecula1 / ATCC 700964</strain>
    </source>
</reference>
<organism>
    <name type="scientific">Xylella fastidiosa (strain Temecula1 / ATCC 700964)</name>
    <dbReference type="NCBI Taxonomy" id="183190"/>
    <lineage>
        <taxon>Bacteria</taxon>
        <taxon>Pseudomonadati</taxon>
        <taxon>Pseudomonadota</taxon>
        <taxon>Gammaproteobacteria</taxon>
        <taxon>Lysobacterales</taxon>
        <taxon>Lysobacteraceae</taxon>
        <taxon>Xylella</taxon>
    </lineage>
</organism>
<protein>
    <recommendedName>
        <fullName evidence="1">Large ribosomal subunit protein uL13</fullName>
    </recommendedName>
    <alternativeName>
        <fullName evidence="2">50S ribosomal protein L13</fullName>
    </alternativeName>
</protein>
<comment type="function">
    <text evidence="1">This protein is one of the early assembly proteins of the 50S ribosomal subunit, although it is not seen to bind rRNA by itself. It is important during the early stages of 50S assembly.</text>
</comment>
<comment type="subunit">
    <text evidence="1">Part of the 50S ribosomal subunit.</text>
</comment>
<comment type="similarity">
    <text evidence="1">Belongs to the universal ribosomal protein uL13 family.</text>
</comment>
<feature type="chain" id="PRO_0000306402" description="Large ribosomal subunit protein uL13">
    <location>
        <begin position="1"/>
        <end position="142"/>
    </location>
</feature>
<evidence type="ECO:0000255" key="1">
    <source>
        <dbReference type="HAMAP-Rule" id="MF_01366"/>
    </source>
</evidence>
<evidence type="ECO:0000305" key="2"/>
<name>RL13_XYLFT</name>
<keyword id="KW-1185">Reference proteome</keyword>
<keyword id="KW-0687">Ribonucleoprotein</keyword>
<keyword id="KW-0689">Ribosomal protein</keyword>
<dbReference type="EMBL" id="AE009442">
    <property type="protein sequence ID" value="AAO28621.1"/>
    <property type="molecule type" value="Genomic_DNA"/>
</dbReference>
<dbReference type="RefSeq" id="WP_004083669.1">
    <property type="nucleotide sequence ID" value="NC_004556.1"/>
</dbReference>
<dbReference type="SMR" id="Q87DD3"/>
<dbReference type="GeneID" id="93904531"/>
<dbReference type="KEGG" id="xft:PD_0752"/>
<dbReference type="HOGENOM" id="CLU_082184_2_2_6"/>
<dbReference type="Proteomes" id="UP000002516">
    <property type="component" value="Chromosome"/>
</dbReference>
<dbReference type="GO" id="GO:0022625">
    <property type="term" value="C:cytosolic large ribosomal subunit"/>
    <property type="evidence" value="ECO:0007669"/>
    <property type="project" value="TreeGrafter"/>
</dbReference>
<dbReference type="GO" id="GO:0003729">
    <property type="term" value="F:mRNA binding"/>
    <property type="evidence" value="ECO:0007669"/>
    <property type="project" value="TreeGrafter"/>
</dbReference>
<dbReference type="GO" id="GO:0003735">
    <property type="term" value="F:structural constituent of ribosome"/>
    <property type="evidence" value="ECO:0007669"/>
    <property type="project" value="InterPro"/>
</dbReference>
<dbReference type="GO" id="GO:0017148">
    <property type="term" value="P:negative regulation of translation"/>
    <property type="evidence" value="ECO:0007669"/>
    <property type="project" value="TreeGrafter"/>
</dbReference>
<dbReference type="GO" id="GO:0006412">
    <property type="term" value="P:translation"/>
    <property type="evidence" value="ECO:0007669"/>
    <property type="project" value="UniProtKB-UniRule"/>
</dbReference>
<dbReference type="CDD" id="cd00392">
    <property type="entry name" value="Ribosomal_L13"/>
    <property type="match status" value="1"/>
</dbReference>
<dbReference type="FunFam" id="3.90.1180.10:FF:000001">
    <property type="entry name" value="50S ribosomal protein L13"/>
    <property type="match status" value="1"/>
</dbReference>
<dbReference type="Gene3D" id="3.90.1180.10">
    <property type="entry name" value="Ribosomal protein L13"/>
    <property type="match status" value="1"/>
</dbReference>
<dbReference type="HAMAP" id="MF_01366">
    <property type="entry name" value="Ribosomal_uL13"/>
    <property type="match status" value="1"/>
</dbReference>
<dbReference type="InterPro" id="IPR005822">
    <property type="entry name" value="Ribosomal_uL13"/>
</dbReference>
<dbReference type="InterPro" id="IPR005823">
    <property type="entry name" value="Ribosomal_uL13_bac-type"/>
</dbReference>
<dbReference type="InterPro" id="IPR023563">
    <property type="entry name" value="Ribosomal_uL13_CS"/>
</dbReference>
<dbReference type="InterPro" id="IPR036899">
    <property type="entry name" value="Ribosomal_uL13_sf"/>
</dbReference>
<dbReference type="NCBIfam" id="TIGR01066">
    <property type="entry name" value="rplM_bact"/>
    <property type="match status" value="1"/>
</dbReference>
<dbReference type="PANTHER" id="PTHR11545:SF2">
    <property type="entry name" value="LARGE RIBOSOMAL SUBUNIT PROTEIN UL13M"/>
    <property type="match status" value="1"/>
</dbReference>
<dbReference type="PANTHER" id="PTHR11545">
    <property type="entry name" value="RIBOSOMAL PROTEIN L13"/>
    <property type="match status" value="1"/>
</dbReference>
<dbReference type="Pfam" id="PF00572">
    <property type="entry name" value="Ribosomal_L13"/>
    <property type="match status" value="1"/>
</dbReference>
<dbReference type="PIRSF" id="PIRSF002181">
    <property type="entry name" value="Ribosomal_L13"/>
    <property type="match status" value="1"/>
</dbReference>
<dbReference type="SUPFAM" id="SSF52161">
    <property type="entry name" value="Ribosomal protein L13"/>
    <property type="match status" value="1"/>
</dbReference>
<dbReference type="PROSITE" id="PS00783">
    <property type="entry name" value="RIBOSOMAL_L13"/>
    <property type="match status" value="1"/>
</dbReference>